<accession>Q62K45</accession>
<sequence length="345" mass="36679">MFSSLYPLARASLFKMDAEDAHHLTLRMLGAAGRTGLACALSPRVPDAPRTVMGLSFRNPVGLAAGLDKDGAAIDGFAALGFGFIEVGTVTPRAQPGNPRPRMFRLPEADAIINRMGFNNSGVDQFVKNVQAARYRGVLGLNIGKNADTPIERAADDYLYCLERVYPFASYVTINISSPNTKNLRQLQGAGELDALLAALKDKQRRLADLHGKLVPLALKIAPDLDDEQVKEIAATLLRHDIEGVIATNTTLSREAVKGLPHADEAGGLSGRPVFDASNAVIRKLRAELGDAVPIIGVGGIFSGEDARAKLAAGAALVQLYTGFIYRGPALVAECVKAIARGEAR</sequence>
<feature type="chain" id="PRO_0000148428" description="Dihydroorotate dehydrogenase (quinone)">
    <location>
        <begin position="1"/>
        <end position="345"/>
    </location>
</feature>
<feature type="active site" description="Nucleophile" evidence="1">
    <location>
        <position position="178"/>
    </location>
</feature>
<feature type="binding site" evidence="1">
    <location>
        <begin position="65"/>
        <end position="69"/>
    </location>
    <ligand>
        <name>FMN</name>
        <dbReference type="ChEBI" id="CHEBI:58210"/>
    </ligand>
</feature>
<feature type="binding site" evidence="1">
    <location>
        <position position="69"/>
    </location>
    <ligand>
        <name>substrate</name>
    </ligand>
</feature>
<feature type="binding site" evidence="1">
    <location>
        <position position="89"/>
    </location>
    <ligand>
        <name>FMN</name>
        <dbReference type="ChEBI" id="CHEBI:58210"/>
    </ligand>
</feature>
<feature type="binding site" evidence="1">
    <location>
        <begin position="114"/>
        <end position="118"/>
    </location>
    <ligand>
        <name>substrate</name>
    </ligand>
</feature>
<feature type="binding site" evidence="1">
    <location>
        <position position="142"/>
    </location>
    <ligand>
        <name>FMN</name>
        <dbReference type="ChEBI" id="CHEBI:58210"/>
    </ligand>
</feature>
<feature type="binding site" evidence="1">
    <location>
        <position position="175"/>
    </location>
    <ligand>
        <name>FMN</name>
        <dbReference type="ChEBI" id="CHEBI:58210"/>
    </ligand>
</feature>
<feature type="binding site" evidence="1">
    <location>
        <position position="175"/>
    </location>
    <ligand>
        <name>substrate</name>
    </ligand>
</feature>
<feature type="binding site" evidence="1">
    <location>
        <position position="180"/>
    </location>
    <ligand>
        <name>substrate</name>
    </ligand>
</feature>
<feature type="binding site" evidence="1">
    <location>
        <position position="220"/>
    </location>
    <ligand>
        <name>FMN</name>
        <dbReference type="ChEBI" id="CHEBI:58210"/>
    </ligand>
</feature>
<feature type="binding site" evidence="1">
    <location>
        <position position="248"/>
    </location>
    <ligand>
        <name>FMN</name>
        <dbReference type="ChEBI" id="CHEBI:58210"/>
    </ligand>
</feature>
<feature type="binding site" evidence="1">
    <location>
        <begin position="249"/>
        <end position="250"/>
    </location>
    <ligand>
        <name>substrate</name>
    </ligand>
</feature>
<feature type="binding site" evidence="1">
    <location>
        <position position="271"/>
    </location>
    <ligand>
        <name>FMN</name>
        <dbReference type="ChEBI" id="CHEBI:58210"/>
    </ligand>
</feature>
<feature type="binding site" evidence="1">
    <location>
        <position position="300"/>
    </location>
    <ligand>
        <name>FMN</name>
        <dbReference type="ChEBI" id="CHEBI:58210"/>
    </ligand>
</feature>
<feature type="binding site" evidence="1">
    <location>
        <begin position="321"/>
        <end position="322"/>
    </location>
    <ligand>
        <name>FMN</name>
        <dbReference type="ChEBI" id="CHEBI:58210"/>
    </ligand>
</feature>
<organism>
    <name type="scientific">Burkholderia mallei (strain ATCC 23344)</name>
    <dbReference type="NCBI Taxonomy" id="243160"/>
    <lineage>
        <taxon>Bacteria</taxon>
        <taxon>Pseudomonadati</taxon>
        <taxon>Pseudomonadota</taxon>
        <taxon>Betaproteobacteria</taxon>
        <taxon>Burkholderiales</taxon>
        <taxon>Burkholderiaceae</taxon>
        <taxon>Burkholderia</taxon>
        <taxon>pseudomallei group</taxon>
    </lineage>
</organism>
<dbReference type="EC" id="1.3.5.2" evidence="1"/>
<dbReference type="EMBL" id="CP000010">
    <property type="protein sequence ID" value="AAU47479.1"/>
    <property type="molecule type" value="Genomic_DNA"/>
</dbReference>
<dbReference type="RefSeq" id="WP_004193208.1">
    <property type="nucleotide sequence ID" value="NC_006348.1"/>
</dbReference>
<dbReference type="RefSeq" id="YP_102924.1">
    <property type="nucleotide sequence ID" value="NC_006348.1"/>
</dbReference>
<dbReference type="SMR" id="Q62K45"/>
<dbReference type="KEGG" id="bma:BMA1253"/>
<dbReference type="PATRIC" id="fig|243160.12.peg.1284"/>
<dbReference type="eggNOG" id="COG0167">
    <property type="taxonomic scope" value="Bacteria"/>
</dbReference>
<dbReference type="HOGENOM" id="CLU_013640_2_0_4"/>
<dbReference type="UniPathway" id="UPA00070">
    <property type="reaction ID" value="UER00946"/>
</dbReference>
<dbReference type="Proteomes" id="UP000006693">
    <property type="component" value="Chromosome 1"/>
</dbReference>
<dbReference type="GO" id="GO:0005737">
    <property type="term" value="C:cytoplasm"/>
    <property type="evidence" value="ECO:0007669"/>
    <property type="project" value="InterPro"/>
</dbReference>
<dbReference type="GO" id="GO:0005886">
    <property type="term" value="C:plasma membrane"/>
    <property type="evidence" value="ECO:0007669"/>
    <property type="project" value="UniProtKB-SubCell"/>
</dbReference>
<dbReference type="GO" id="GO:0106430">
    <property type="term" value="F:dihydroorotate dehydrogenase (quinone) activity"/>
    <property type="evidence" value="ECO:0007669"/>
    <property type="project" value="UniProtKB-EC"/>
</dbReference>
<dbReference type="GO" id="GO:0006207">
    <property type="term" value="P:'de novo' pyrimidine nucleobase biosynthetic process"/>
    <property type="evidence" value="ECO:0007669"/>
    <property type="project" value="InterPro"/>
</dbReference>
<dbReference type="GO" id="GO:0044205">
    <property type="term" value="P:'de novo' UMP biosynthetic process"/>
    <property type="evidence" value="ECO:0007669"/>
    <property type="project" value="UniProtKB-UniRule"/>
</dbReference>
<dbReference type="CDD" id="cd04738">
    <property type="entry name" value="DHOD_2_like"/>
    <property type="match status" value="1"/>
</dbReference>
<dbReference type="FunFam" id="3.20.20.70:FF:000028">
    <property type="entry name" value="Dihydroorotate dehydrogenase (quinone)"/>
    <property type="match status" value="1"/>
</dbReference>
<dbReference type="Gene3D" id="3.20.20.70">
    <property type="entry name" value="Aldolase class I"/>
    <property type="match status" value="1"/>
</dbReference>
<dbReference type="HAMAP" id="MF_00225">
    <property type="entry name" value="DHO_dh_type2"/>
    <property type="match status" value="1"/>
</dbReference>
<dbReference type="InterPro" id="IPR013785">
    <property type="entry name" value="Aldolase_TIM"/>
</dbReference>
<dbReference type="InterPro" id="IPR050074">
    <property type="entry name" value="DHO_dehydrogenase"/>
</dbReference>
<dbReference type="InterPro" id="IPR012135">
    <property type="entry name" value="Dihydroorotate_DH_1_2"/>
</dbReference>
<dbReference type="InterPro" id="IPR005719">
    <property type="entry name" value="Dihydroorotate_DH_2"/>
</dbReference>
<dbReference type="InterPro" id="IPR005720">
    <property type="entry name" value="Dihydroorotate_DH_cat"/>
</dbReference>
<dbReference type="InterPro" id="IPR001295">
    <property type="entry name" value="Dihydroorotate_DH_CS"/>
</dbReference>
<dbReference type="NCBIfam" id="NF003644">
    <property type="entry name" value="PRK05286.1-1"/>
    <property type="match status" value="1"/>
</dbReference>
<dbReference type="NCBIfam" id="NF003645">
    <property type="entry name" value="PRK05286.1-2"/>
    <property type="match status" value="1"/>
</dbReference>
<dbReference type="NCBIfam" id="NF003646">
    <property type="entry name" value="PRK05286.1-4"/>
    <property type="match status" value="1"/>
</dbReference>
<dbReference type="NCBIfam" id="NF003652">
    <property type="entry name" value="PRK05286.2-5"/>
    <property type="match status" value="1"/>
</dbReference>
<dbReference type="NCBIfam" id="TIGR01036">
    <property type="entry name" value="pyrD_sub2"/>
    <property type="match status" value="1"/>
</dbReference>
<dbReference type="PANTHER" id="PTHR48109:SF4">
    <property type="entry name" value="DIHYDROOROTATE DEHYDROGENASE (QUINONE), MITOCHONDRIAL"/>
    <property type="match status" value="1"/>
</dbReference>
<dbReference type="PANTHER" id="PTHR48109">
    <property type="entry name" value="DIHYDROOROTATE DEHYDROGENASE (QUINONE), MITOCHONDRIAL-RELATED"/>
    <property type="match status" value="1"/>
</dbReference>
<dbReference type="Pfam" id="PF01180">
    <property type="entry name" value="DHO_dh"/>
    <property type="match status" value="1"/>
</dbReference>
<dbReference type="PIRSF" id="PIRSF000164">
    <property type="entry name" value="DHO_oxidase"/>
    <property type="match status" value="1"/>
</dbReference>
<dbReference type="SUPFAM" id="SSF51395">
    <property type="entry name" value="FMN-linked oxidoreductases"/>
    <property type="match status" value="1"/>
</dbReference>
<dbReference type="PROSITE" id="PS00911">
    <property type="entry name" value="DHODEHASE_1"/>
    <property type="match status" value="1"/>
</dbReference>
<dbReference type="PROSITE" id="PS00912">
    <property type="entry name" value="DHODEHASE_2"/>
    <property type="match status" value="1"/>
</dbReference>
<evidence type="ECO:0000255" key="1">
    <source>
        <dbReference type="HAMAP-Rule" id="MF_00225"/>
    </source>
</evidence>
<name>PYRD_BURMA</name>
<gene>
    <name evidence="1" type="primary">pyrD</name>
    <name type="ordered locus">BMA1253</name>
</gene>
<comment type="function">
    <text evidence="1">Catalyzes the conversion of dihydroorotate to orotate with quinone as electron acceptor.</text>
</comment>
<comment type="catalytic activity">
    <reaction evidence="1">
        <text>(S)-dihydroorotate + a quinone = orotate + a quinol</text>
        <dbReference type="Rhea" id="RHEA:30187"/>
        <dbReference type="ChEBI" id="CHEBI:24646"/>
        <dbReference type="ChEBI" id="CHEBI:30839"/>
        <dbReference type="ChEBI" id="CHEBI:30864"/>
        <dbReference type="ChEBI" id="CHEBI:132124"/>
        <dbReference type="EC" id="1.3.5.2"/>
    </reaction>
</comment>
<comment type="cofactor">
    <cofactor evidence="1">
        <name>FMN</name>
        <dbReference type="ChEBI" id="CHEBI:58210"/>
    </cofactor>
    <text evidence="1">Binds 1 FMN per subunit.</text>
</comment>
<comment type="pathway">
    <text evidence="1">Pyrimidine metabolism; UMP biosynthesis via de novo pathway; orotate from (S)-dihydroorotate (quinone route): step 1/1.</text>
</comment>
<comment type="subunit">
    <text evidence="1">Monomer.</text>
</comment>
<comment type="subcellular location">
    <subcellularLocation>
        <location evidence="1">Cell membrane</location>
        <topology evidence="1">Peripheral membrane protein</topology>
    </subcellularLocation>
</comment>
<comment type="similarity">
    <text evidence="1">Belongs to the dihydroorotate dehydrogenase family. Type 2 subfamily.</text>
</comment>
<keyword id="KW-1003">Cell membrane</keyword>
<keyword id="KW-0285">Flavoprotein</keyword>
<keyword id="KW-0288">FMN</keyword>
<keyword id="KW-0472">Membrane</keyword>
<keyword id="KW-0560">Oxidoreductase</keyword>
<keyword id="KW-0665">Pyrimidine biosynthesis</keyword>
<keyword id="KW-1185">Reference proteome</keyword>
<protein>
    <recommendedName>
        <fullName evidence="1">Dihydroorotate dehydrogenase (quinone)</fullName>
        <ecNumber evidence="1">1.3.5.2</ecNumber>
    </recommendedName>
    <alternativeName>
        <fullName evidence="1">DHOdehase</fullName>
        <shortName evidence="1">DHOD</shortName>
        <shortName evidence="1">DHODase</shortName>
    </alternativeName>
    <alternativeName>
        <fullName evidence="1">Dihydroorotate oxidase</fullName>
    </alternativeName>
</protein>
<proteinExistence type="inferred from homology"/>
<reference key="1">
    <citation type="journal article" date="2004" name="Proc. Natl. Acad. Sci. U.S.A.">
        <title>Structural flexibility in the Burkholderia mallei genome.</title>
        <authorList>
            <person name="Nierman W.C."/>
            <person name="DeShazer D."/>
            <person name="Kim H.S."/>
            <person name="Tettelin H."/>
            <person name="Nelson K.E."/>
            <person name="Feldblyum T.V."/>
            <person name="Ulrich R.L."/>
            <person name="Ronning C.M."/>
            <person name="Brinkac L.M."/>
            <person name="Daugherty S.C."/>
            <person name="Davidsen T.D."/>
            <person name="DeBoy R.T."/>
            <person name="Dimitrov G."/>
            <person name="Dodson R.J."/>
            <person name="Durkin A.S."/>
            <person name="Gwinn M.L."/>
            <person name="Haft D.H."/>
            <person name="Khouri H.M."/>
            <person name="Kolonay J.F."/>
            <person name="Madupu R."/>
            <person name="Mohammoud Y."/>
            <person name="Nelson W.C."/>
            <person name="Radune D."/>
            <person name="Romero C.M."/>
            <person name="Sarria S."/>
            <person name="Selengut J."/>
            <person name="Shamblin C."/>
            <person name="Sullivan S.A."/>
            <person name="White O."/>
            <person name="Yu Y."/>
            <person name="Zafar N."/>
            <person name="Zhou L."/>
            <person name="Fraser C.M."/>
        </authorList>
    </citation>
    <scope>NUCLEOTIDE SEQUENCE [LARGE SCALE GENOMIC DNA]</scope>
    <source>
        <strain>ATCC 23344</strain>
    </source>
</reference>